<sequence length="442" mass="49642">MEASRCRLSPSGDSVFHEEMMKMRQAKLDYQRLLLEKRQRKKRLEPFMVQPNPEARLRRAKPRASDEQTPLVNCHTPHSNVILHGIDGPAAVLKPDEVHAPSVSSSVVEEDAENTVDTASKPGLQERLQKHDISESVNFDEETDGISQSACLERPNSASSQNSTDTGTSGSATAAQPADNLLGDIDDLEDFVYSPAPQGVTVRCRIIRDKRGMDRGLFPTYYMYLEKEENQKIFLLAARKRKKSKTANYLISIDPVDLSREGESYVGKLRSNLMGTKFTVYDRGICPMKGRGLVGAAHTRQELAAISYETNVLGFKGPRKMSVIIPGMTLNHKQIPYQPQNNHDSLLSRWQNRTMENLVELHNKAPVWNSDTQSYVLNFRGRVTQASVKNFQIVHKNDPDYIVMQFGRVADDVFTLDYNYPLCAVQAFGIGLSSFDSKLACE</sequence>
<accession>O75386</accession>
<accession>B3KNB7</accession>
<accession>B7Z6A2</accession>
<accession>D3DUQ4</accession>
<accession>F8WBZ9</accession>
<accession>Q8N5B0</accession>
<feature type="chain" id="PRO_0000186470" description="Tubby-related protein 3">
    <location>
        <begin position="1"/>
        <end position="442"/>
    </location>
</feature>
<feature type="region of interest" description="Required for association with the IFT complex A (IFT-A)">
    <location>
        <begin position="23"/>
        <end position="68"/>
    </location>
</feature>
<feature type="region of interest" description="Disordered" evidence="2">
    <location>
        <begin position="101"/>
        <end position="177"/>
    </location>
</feature>
<feature type="compositionally biased region" description="Polar residues" evidence="2">
    <location>
        <begin position="145"/>
        <end position="162"/>
    </location>
</feature>
<feature type="compositionally biased region" description="Low complexity" evidence="2">
    <location>
        <begin position="163"/>
        <end position="175"/>
    </location>
</feature>
<feature type="splice variant" id="VSP_055761" description="In isoform 3." evidence="9">
    <location>
        <begin position="1"/>
        <end position="19"/>
    </location>
</feature>
<feature type="splice variant" id="VSP_055762" description="In isoform 3." evidence="9">
    <original>DTGTSGSATAAQPADNLLGDIDDLE</original>
    <variation>FSSFCQKTEDTGYRHFRFCYCRPTS</variation>
    <location>
        <begin position="165"/>
        <end position="189"/>
    </location>
</feature>
<feature type="splice variant" id="VSP_055763" description="In isoform 3." evidence="9">
    <location>
        <begin position="190"/>
        <end position="442"/>
    </location>
</feature>
<feature type="splice variant" id="VSP_054752" description="In isoform 2." evidence="10">
    <original>SKLACE</original>
    <variation>KCIQTLRMQELCELHRQHHSAASLVHRTVCQRWVGHPWRLLPQTSLLWTDLSPPPVVPAPHQISM</variation>
    <location>
        <begin position="437"/>
        <end position="442"/>
    </location>
</feature>
<feature type="sequence variant" id="VAR_087378" description="In HRCDF." evidence="7">
    <location>
        <begin position="24"/>
        <end position="442"/>
    </location>
</feature>
<feature type="sequence variant" id="VAR_087379" description="In HRCDF; uncertain significance; dbSNP:rs547315819." evidence="7">
    <original>C</original>
    <variation>W</variation>
    <location>
        <position position="204"/>
    </location>
</feature>
<feature type="sequence variant" id="VAR_087380" description="In HRCDF; almost complete loss of ciliary localization; dbSNP:rs761172007." evidence="7">
    <original>R</original>
    <variation>H</variation>
    <location>
        <position position="408"/>
    </location>
</feature>
<feature type="mutagenesis site" description="In mut12; abolishes association with the IFT complex A (IFT-A) without affecting phosphoinositide binding. Impaired localization to cilia." evidence="4">
    <original>RQAKLDYQRLL</original>
    <variation>AQAAADYAALA</variation>
    <location>
        <begin position="24"/>
        <end position="34"/>
    </location>
</feature>
<feature type="mutagenesis site" description="In TULP3KR; abolishes phosphoinositide binding and impairs localization to cilia. Still associates with the IFT complex A (IFT-A)." evidence="4">
    <original>KLR</original>
    <variation>ALA</variation>
    <location>
        <begin position="268"/>
        <end position="270"/>
    </location>
</feature>
<feature type="sequence conflict" description="In Ref. 1; AAC95431." evidence="10" ref="1">
    <original>TSGSATAAQPADNL</original>
    <variation>IPVLLLPPNQLITF</variation>
    <location>
        <begin position="168"/>
        <end position="181"/>
    </location>
</feature>
<feature type="sequence conflict" description="In Ref. 5; AAH32587." evidence="10" ref="5">
    <original>D</original>
    <variation>Y</variation>
    <location>
        <position position="187"/>
    </location>
</feature>
<feature type="sequence conflict" description="In Ref. 1; AAC95431." evidence="10" ref="1">
    <original>YS</original>
    <variation>LV</variation>
    <location>
        <begin position="193"/>
        <end position="194"/>
    </location>
</feature>
<feature type="sequence conflict" description="In Ref. 1; AAC95431." evidence="10" ref="1">
    <original>PTYYMYLE</original>
    <variation>SHLLYVLG</variation>
    <location>
        <begin position="219"/>
        <end position="226"/>
    </location>
</feature>
<feature type="sequence conflict" description="In Ref. 1; AAC95431." evidence="10" ref="1">
    <original>I</original>
    <variation>L</variation>
    <location>
        <position position="393"/>
    </location>
</feature>
<feature type="sequence conflict" description="In Ref. 1; AAC95431." evidence="10" ref="1">
    <original>GIG</original>
    <variation>AIS</variation>
    <location>
        <begin position="429"/>
        <end position="431"/>
    </location>
</feature>
<keyword id="KW-0002">3D-structure</keyword>
<keyword id="KW-0025">Alternative splicing</keyword>
<keyword id="KW-1003">Cell membrane</keyword>
<keyword id="KW-0966">Cell projection</keyword>
<keyword id="KW-1186">Ciliopathy</keyword>
<keyword id="KW-0969">Cilium</keyword>
<keyword id="KW-0963">Cytoplasm</keyword>
<keyword id="KW-0217">Developmental protein</keyword>
<keyword id="KW-0225">Disease variant</keyword>
<keyword id="KW-0472">Membrane</keyword>
<keyword id="KW-0539">Nucleus</keyword>
<keyword id="KW-1267">Proteomics identification</keyword>
<keyword id="KW-1185">Reference proteome</keyword>
<keyword id="KW-0964">Secreted</keyword>
<protein>
    <recommendedName>
        <fullName evidence="10">Tubby-related protein 3</fullName>
    </recommendedName>
    <alternativeName>
        <fullName>Tubby-like protein 3</fullName>
    </alternativeName>
</protein>
<proteinExistence type="evidence at protein level"/>
<name>TULP3_HUMAN</name>
<organism>
    <name type="scientific">Homo sapiens</name>
    <name type="common">Human</name>
    <dbReference type="NCBI Taxonomy" id="9606"/>
    <lineage>
        <taxon>Eukaryota</taxon>
        <taxon>Metazoa</taxon>
        <taxon>Chordata</taxon>
        <taxon>Craniata</taxon>
        <taxon>Vertebrata</taxon>
        <taxon>Euteleostomi</taxon>
        <taxon>Mammalia</taxon>
        <taxon>Eutheria</taxon>
        <taxon>Euarchontoglires</taxon>
        <taxon>Primates</taxon>
        <taxon>Haplorrhini</taxon>
        <taxon>Catarrhini</taxon>
        <taxon>Hominidae</taxon>
        <taxon>Homo</taxon>
    </lineage>
</organism>
<evidence type="ECO:0000250" key="1"/>
<evidence type="ECO:0000256" key="2">
    <source>
        <dbReference type="SAM" id="MobiDB-lite"/>
    </source>
</evidence>
<evidence type="ECO:0000269" key="3">
    <source>
    </source>
</evidence>
<evidence type="ECO:0000269" key="4">
    <source>
    </source>
</evidence>
<evidence type="ECO:0000269" key="5">
    <source>
    </source>
</evidence>
<evidence type="ECO:0000269" key="6">
    <source>
    </source>
</evidence>
<evidence type="ECO:0000269" key="7">
    <source>
    </source>
</evidence>
<evidence type="ECO:0000269" key="8">
    <source>
    </source>
</evidence>
<evidence type="ECO:0000303" key="9">
    <source>
    </source>
</evidence>
<evidence type="ECO:0000305" key="10"/>
<evidence type="ECO:0000312" key="11">
    <source>
        <dbReference type="HGNC" id="HGNC:12425"/>
    </source>
</evidence>
<dbReference type="EMBL" id="AF045583">
    <property type="protein sequence ID" value="AAC95431.1"/>
    <property type="molecule type" value="mRNA"/>
</dbReference>
<dbReference type="EMBL" id="AK024246">
    <property type="protein sequence ID" value="BAG51279.1"/>
    <property type="molecule type" value="mRNA"/>
</dbReference>
<dbReference type="EMBL" id="AK299990">
    <property type="protein sequence ID" value="BAH13188.1"/>
    <property type="molecule type" value="mRNA"/>
</dbReference>
<dbReference type="EMBL" id="AC005911">
    <property type="status" value="NOT_ANNOTATED_CDS"/>
    <property type="molecule type" value="Genomic_DNA"/>
</dbReference>
<dbReference type="EMBL" id="CH471116">
    <property type="protein sequence ID" value="EAW88876.1"/>
    <property type="molecule type" value="Genomic_DNA"/>
</dbReference>
<dbReference type="EMBL" id="CH471116">
    <property type="protein sequence ID" value="EAW88877.1"/>
    <property type="molecule type" value="Genomic_DNA"/>
</dbReference>
<dbReference type="EMBL" id="CH471116">
    <property type="protein sequence ID" value="EAW88878.1"/>
    <property type="molecule type" value="Genomic_DNA"/>
</dbReference>
<dbReference type="EMBL" id="BC032587">
    <property type="protein sequence ID" value="AAH32587.1"/>
    <property type="molecule type" value="mRNA"/>
</dbReference>
<dbReference type="CCDS" id="CCDS53737.1">
    <molecule id="O75386-2"/>
</dbReference>
<dbReference type="CCDS" id="CCDS8519.1">
    <molecule id="O75386-1"/>
</dbReference>
<dbReference type="RefSeq" id="NP_001153880.1">
    <molecule id="O75386-2"/>
    <property type="nucleotide sequence ID" value="NM_001160408.2"/>
</dbReference>
<dbReference type="RefSeq" id="NP_003315.2">
    <molecule id="O75386-1"/>
    <property type="nucleotide sequence ID" value="NM_003324.4"/>
</dbReference>
<dbReference type="PDB" id="8FH3">
    <property type="method" value="EM"/>
    <property type="resolution" value="4.30 A"/>
    <property type="chains" value="I=1-442"/>
</dbReference>
<dbReference type="PDBsum" id="8FH3"/>
<dbReference type="EMDB" id="EMD-29078"/>
<dbReference type="SMR" id="O75386"/>
<dbReference type="BioGRID" id="113140">
    <property type="interactions" value="343"/>
</dbReference>
<dbReference type="CORUM" id="O75386"/>
<dbReference type="FunCoup" id="O75386">
    <property type="interactions" value="742"/>
</dbReference>
<dbReference type="IntAct" id="O75386">
    <property type="interactions" value="123"/>
</dbReference>
<dbReference type="MINT" id="O75386"/>
<dbReference type="STRING" id="9606.ENSP00000380321"/>
<dbReference type="TCDB" id="8.A.250.1.1">
    <property type="family name" value="the tubby-related protein 3 (tulp3) family"/>
</dbReference>
<dbReference type="iPTMnet" id="O75386"/>
<dbReference type="PhosphoSitePlus" id="O75386"/>
<dbReference type="BioMuta" id="TULP3"/>
<dbReference type="jPOST" id="O75386"/>
<dbReference type="MassIVE" id="O75386"/>
<dbReference type="PaxDb" id="9606-ENSP00000380321"/>
<dbReference type="PeptideAtlas" id="O75386"/>
<dbReference type="ProteomicsDB" id="30981"/>
<dbReference type="ProteomicsDB" id="49959">
    <molecule id="O75386-1"/>
</dbReference>
<dbReference type="ProteomicsDB" id="6762"/>
<dbReference type="Pumba" id="O75386"/>
<dbReference type="Antibodypedia" id="10458">
    <property type="antibodies" value="267 antibodies from 24 providers"/>
</dbReference>
<dbReference type="DNASU" id="7289"/>
<dbReference type="Ensembl" id="ENST00000397132.6">
    <molecule id="O75386-2"/>
    <property type="protein sequence ID" value="ENSP00000380321.2"/>
    <property type="gene ID" value="ENSG00000078246.17"/>
</dbReference>
<dbReference type="Ensembl" id="ENST00000448120.7">
    <molecule id="O75386-1"/>
    <property type="protein sequence ID" value="ENSP00000410051.2"/>
    <property type="gene ID" value="ENSG00000078246.17"/>
</dbReference>
<dbReference type="Ensembl" id="ENST00000540184.5">
    <molecule id="O75386-3"/>
    <property type="protein sequence ID" value="ENSP00000444110.1"/>
    <property type="gene ID" value="ENSG00000078246.17"/>
</dbReference>
<dbReference type="GeneID" id="7289"/>
<dbReference type="KEGG" id="hsa:7289"/>
<dbReference type="MANE-Select" id="ENST00000448120.7">
    <property type="protein sequence ID" value="ENSP00000410051.2"/>
    <property type="RefSeq nucleotide sequence ID" value="NM_003324.5"/>
    <property type="RefSeq protein sequence ID" value="NP_003315.2"/>
</dbReference>
<dbReference type="UCSC" id="uc001qlj.3">
    <molecule id="O75386-1"/>
    <property type="organism name" value="human"/>
</dbReference>
<dbReference type="AGR" id="HGNC:12425"/>
<dbReference type="CTD" id="7289"/>
<dbReference type="DisGeNET" id="7289"/>
<dbReference type="GeneCards" id="TULP3"/>
<dbReference type="HGNC" id="HGNC:12425">
    <property type="gene designation" value="TULP3"/>
</dbReference>
<dbReference type="HPA" id="ENSG00000078246">
    <property type="expression patterns" value="Low tissue specificity"/>
</dbReference>
<dbReference type="MalaCards" id="TULP3"/>
<dbReference type="MIM" id="604730">
    <property type="type" value="gene"/>
</dbReference>
<dbReference type="MIM" id="619902">
    <property type="type" value="phenotype"/>
</dbReference>
<dbReference type="neXtProt" id="NX_O75386"/>
<dbReference type="OpenTargets" id="ENSG00000078246"/>
<dbReference type="PharmGKB" id="PA37087"/>
<dbReference type="VEuPathDB" id="HostDB:ENSG00000078246"/>
<dbReference type="eggNOG" id="KOG2502">
    <property type="taxonomic scope" value="Eukaryota"/>
</dbReference>
<dbReference type="GeneTree" id="ENSGT00940000158155"/>
<dbReference type="HOGENOM" id="CLU_1570112_0_0_1"/>
<dbReference type="InParanoid" id="O75386"/>
<dbReference type="OMA" id="EPHTPHN"/>
<dbReference type="OrthoDB" id="8775810at2759"/>
<dbReference type="PAN-GO" id="O75386">
    <property type="GO annotations" value="2 GO annotations based on evolutionary models"/>
</dbReference>
<dbReference type="PhylomeDB" id="O75386"/>
<dbReference type="TreeFam" id="TF314076"/>
<dbReference type="PathwayCommons" id="O75386"/>
<dbReference type="Reactome" id="R-HSA-5610787">
    <property type="pathway name" value="Hedgehog 'off' state"/>
</dbReference>
<dbReference type="SignaLink" id="O75386"/>
<dbReference type="SIGNOR" id="O75386"/>
<dbReference type="BioGRID-ORCS" id="7289">
    <property type="hits" value="11 hits in 1176 CRISPR screens"/>
</dbReference>
<dbReference type="ChiTaRS" id="TULP3">
    <property type="organism name" value="human"/>
</dbReference>
<dbReference type="GenomeRNAi" id="7289"/>
<dbReference type="Pharos" id="O75386">
    <property type="development level" value="Tbio"/>
</dbReference>
<dbReference type="PRO" id="PR:O75386"/>
<dbReference type="Proteomes" id="UP000005640">
    <property type="component" value="Chromosome 12"/>
</dbReference>
<dbReference type="RNAct" id="O75386">
    <property type="molecule type" value="protein"/>
</dbReference>
<dbReference type="Bgee" id="ENSG00000078246">
    <property type="expression patterns" value="Expressed in secondary oocyte and 210 other cell types or tissues"/>
</dbReference>
<dbReference type="ExpressionAtlas" id="O75386">
    <property type="expression patterns" value="baseline and differential"/>
</dbReference>
<dbReference type="GO" id="GO:0097731">
    <property type="term" value="C:9+0 non-motile cilium"/>
    <property type="evidence" value="ECO:0000314"/>
    <property type="project" value="MGI"/>
</dbReference>
<dbReference type="GO" id="GO:0005930">
    <property type="term" value="C:axoneme"/>
    <property type="evidence" value="ECO:0007669"/>
    <property type="project" value="Ensembl"/>
</dbReference>
<dbReference type="GO" id="GO:0036064">
    <property type="term" value="C:ciliary basal body"/>
    <property type="evidence" value="ECO:0000314"/>
    <property type="project" value="HPA"/>
</dbReference>
<dbReference type="GO" id="GO:0097546">
    <property type="term" value="C:ciliary base"/>
    <property type="evidence" value="ECO:0000314"/>
    <property type="project" value="MGI"/>
</dbReference>
<dbReference type="GO" id="GO:0005929">
    <property type="term" value="C:cilium"/>
    <property type="evidence" value="ECO:0000314"/>
    <property type="project" value="HPA"/>
</dbReference>
<dbReference type="GO" id="GO:0005576">
    <property type="term" value="C:extracellular region"/>
    <property type="evidence" value="ECO:0007669"/>
    <property type="project" value="UniProtKB-SubCell"/>
</dbReference>
<dbReference type="GO" id="GO:0005730">
    <property type="term" value="C:nucleolus"/>
    <property type="evidence" value="ECO:0000314"/>
    <property type="project" value="HPA"/>
</dbReference>
<dbReference type="GO" id="GO:0005654">
    <property type="term" value="C:nucleoplasm"/>
    <property type="evidence" value="ECO:0000314"/>
    <property type="project" value="HPA"/>
</dbReference>
<dbReference type="GO" id="GO:0005634">
    <property type="term" value="C:nucleus"/>
    <property type="evidence" value="ECO:0000314"/>
    <property type="project" value="UniProtKB"/>
</dbReference>
<dbReference type="GO" id="GO:0005886">
    <property type="term" value="C:plasma membrane"/>
    <property type="evidence" value="ECO:0000314"/>
    <property type="project" value="HPA"/>
</dbReference>
<dbReference type="GO" id="GO:0019899">
    <property type="term" value="F:enzyme binding"/>
    <property type="evidence" value="ECO:0000353"/>
    <property type="project" value="UniProtKB"/>
</dbReference>
<dbReference type="GO" id="GO:0001664">
    <property type="term" value="F:G protein-coupled receptor binding"/>
    <property type="evidence" value="ECO:0000314"/>
    <property type="project" value="MGI"/>
</dbReference>
<dbReference type="GO" id="GO:0120160">
    <property type="term" value="F:intraciliary transport particle A binding"/>
    <property type="evidence" value="ECO:0000314"/>
    <property type="project" value="UniProtKB"/>
</dbReference>
<dbReference type="GO" id="GO:0035091">
    <property type="term" value="F:phosphatidylinositol binding"/>
    <property type="evidence" value="ECO:0000314"/>
    <property type="project" value="UniProtKB"/>
</dbReference>
<dbReference type="GO" id="GO:0005546">
    <property type="term" value="F:phosphatidylinositol-4,5-bisphosphate binding"/>
    <property type="evidence" value="ECO:0000303"/>
    <property type="project" value="UniProtKB"/>
</dbReference>
<dbReference type="GO" id="GO:0044877">
    <property type="term" value="F:protein-containing complex binding"/>
    <property type="evidence" value="ECO:0000314"/>
    <property type="project" value="MGI"/>
</dbReference>
<dbReference type="GO" id="GO:0009952">
    <property type="term" value="P:anterior/posterior pattern specification"/>
    <property type="evidence" value="ECO:0007669"/>
    <property type="project" value="Ensembl"/>
</dbReference>
<dbReference type="GO" id="GO:0060348">
    <property type="term" value="P:bone development"/>
    <property type="evidence" value="ECO:0007669"/>
    <property type="project" value="Ensembl"/>
</dbReference>
<dbReference type="GO" id="GO:0007420">
    <property type="term" value="P:brain development"/>
    <property type="evidence" value="ECO:0007669"/>
    <property type="project" value="Ensembl"/>
</dbReference>
<dbReference type="GO" id="GO:0060434">
    <property type="term" value="P:bronchus morphogenesis"/>
    <property type="evidence" value="ECO:0007669"/>
    <property type="project" value="Ensembl"/>
</dbReference>
<dbReference type="GO" id="GO:0021953">
    <property type="term" value="P:central nervous system neuron differentiation"/>
    <property type="evidence" value="ECO:0007669"/>
    <property type="project" value="Ensembl"/>
</dbReference>
<dbReference type="GO" id="GO:0031076">
    <property type="term" value="P:embryonic camera-type eye development"/>
    <property type="evidence" value="ECO:0007669"/>
    <property type="project" value="Ensembl"/>
</dbReference>
<dbReference type="GO" id="GO:0042733">
    <property type="term" value="P:embryonic digit morphogenesis"/>
    <property type="evidence" value="ECO:0007669"/>
    <property type="project" value="Ensembl"/>
</dbReference>
<dbReference type="GO" id="GO:0048702">
    <property type="term" value="P:embryonic neurocranium morphogenesis"/>
    <property type="evidence" value="ECO:0007669"/>
    <property type="project" value="Ensembl"/>
</dbReference>
<dbReference type="GO" id="GO:0007186">
    <property type="term" value="P:G protein-coupled receptor signaling pathway"/>
    <property type="evidence" value="ECO:0000303"/>
    <property type="project" value="UniProtKB"/>
</dbReference>
<dbReference type="GO" id="GO:0061548">
    <property type="term" value="P:ganglion development"/>
    <property type="evidence" value="ECO:0007669"/>
    <property type="project" value="Ensembl"/>
</dbReference>
<dbReference type="GO" id="GO:0045879">
    <property type="term" value="P:negative regulation of smoothened signaling pathway"/>
    <property type="evidence" value="ECO:0000314"/>
    <property type="project" value="UniProtKB"/>
</dbReference>
<dbReference type="GO" id="GO:0001843">
    <property type="term" value="P:neural tube closure"/>
    <property type="evidence" value="ECO:0007669"/>
    <property type="project" value="Ensembl"/>
</dbReference>
<dbReference type="GO" id="GO:0061512">
    <property type="term" value="P:protein localization to cilium"/>
    <property type="evidence" value="ECO:0000314"/>
    <property type="project" value="MGI"/>
</dbReference>
<dbReference type="GO" id="GO:0006355">
    <property type="term" value="P:regulation of DNA-templated transcription"/>
    <property type="evidence" value="ECO:0000303"/>
    <property type="project" value="UniProtKB"/>
</dbReference>
<dbReference type="GO" id="GO:0008277">
    <property type="term" value="P:regulation of G protein-coupled receptor signaling pathway"/>
    <property type="evidence" value="ECO:0000314"/>
    <property type="project" value="UniProtKB"/>
</dbReference>
<dbReference type="GO" id="GO:0060831">
    <property type="term" value="P:smoothened signaling pathway involved in dorsal/ventral neural tube patterning"/>
    <property type="evidence" value="ECO:0007669"/>
    <property type="project" value="Ensembl"/>
</dbReference>
<dbReference type="FunFam" id="3.20.90.10:FF:000001">
    <property type="entry name" value="Tubby-like protein"/>
    <property type="match status" value="1"/>
</dbReference>
<dbReference type="Gene3D" id="3.20.90.10">
    <property type="entry name" value="Tubby Protein, Chain A"/>
    <property type="match status" value="1"/>
</dbReference>
<dbReference type="InterPro" id="IPR025659">
    <property type="entry name" value="Tubby-like_C"/>
</dbReference>
<dbReference type="InterPro" id="IPR000007">
    <property type="entry name" value="Tubby_C"/>
</dbReference>
<dbReference type="InterPro" id="IPR018066">
    <property type="entry name" value="Tubby_C_CS"/>
</dbReference>
<dbReference type="InterPro" id="IPR005398">
    <property type="entry name" value="Tubby_N"/>
</dbReference>
<dbReference type="PANTHER" id="PTHR16517">
    <property type="entry name" value="TUBBY-RELATED"/>
    <property type="match status" value="1"/>
</dbReference>
<dbReference type="PANTHER" id="PTHR16517:SF138">
    <property type="entry name" value="TUBBY-RELATED PROTEIN 3"/>
    <property type="match status" value="1"/>
</dbReference>
<dbReference type="Pfam" id="PF01167">
    <property type="entry name" value="Tub"/>
    <property type="match status" value="1"/>
</dbReference>
<dbReference type="Pfam" id="PF16322">
    <property type="entry name" value="Tub_N"/>
    <property type="match status" value="1"/>
</dbReference>
<dbReference type="PRINTS" id="PR01573">
    <property type="entry name" value="SUPERTUBBY"/>
</dbReference>
<dbReference type="PRINTS" id="PR01574">
    <property type="entry name" value="TUBBYPROTEIN"/>
</dbReference>
<dbReference type="SUPFAM" id="SSF54518">
    <property type="entry name" value="Tubby C-terminal domain-like"/>
    <property type="match status" value="1"/>
</dbReference>
<dbReference type="PROSITE" id="PS01200">
    <property type="entry name" value="TUB_1"/>
    <property type="match status" value="1"/>
</dbReference>
<dbReference type="PROSITE" id="PS01201">
    <property type="entry name" value="TUB_2"/>
    <property type="match status" value="1"/>
</dbReference>
<gene>
    <name evidence="11" type="primary">TULP3</name>
    <name type="synonym">TUBL3</name>
</gene>
<reference key="1">
    <citation type="journal article" date="1998" name="Genomics">
        <title>Molecular characterization of a novel tubby gene family member, TULP3, in mouse and humans.</title>
        <authorList>
            <person name="Nishina P.M."/>
            <person name="North M.A."/>
            <person name="Ikeda A."/>
            <person name="Yan Y."/>
            <person name="Naggert J.K."/>
        </authorList>
    </citation>
    <scope>NUCLEOTIDE SEQUENCE [MRNA] (ISOFORM 1)</scope>
    <scope>TISSUE SPECIFICITY</scope>
</reference>
<reference key="2">
    <citation type="journal article" date="2004" name="Nat. Genet.">
        <title>Complete sequencing and characterization of 21,243 full-length human cDNAs.</title>
        <authorList>
            <person name="Ota T."/>
            <person name="Suzuki Y."/>
            <person name="Nishikawa T."/>
            <person name="Otsuki T."/>
            <person name="Sugiyama T."/>
            <person name="Irie R."/>
            <person name="Wakamatsu A."/>
            <person name="Hayashi K."/>
            <person name="Sato H."/>
            <person name="Nagai K."/>
            <person name="Kimura K."/>
            <person name="Makita H."/>
            <person name="Sekine M."/>
            <person name="Obayashi M."/>
            <person name="Nishi T."/>
            <person name="Shibahara T."/>
            <person name="Tanaka T."/>
            <person name="Ishii S."/>
            <person name="Yamamoto J."/>
            <person name="Saito K."/>
            <person name="Kawai Y."/>
            <person name="Isono Y."/>
            <person name="Nakamura Y."/>
            <person name="Nagahari K."/>
            <person name="Murakami K."/>
            <person name="Yasuda T."/>
            <person name="Iwayanagi T."/>
            <person name="Wagatsuma M."/>
            <person name="Shiratori A."/>
            <person name="Sudo H."/>
            <person name="Hosoiri T."/>
            <person name="Kaku Y."/>
            <person name="Kodaira H."/>
            <person name="Kondo H."/>
            <person name="Sugawara M."/>
            <person name="Takahashi M."/>
            <person name="Kanda K."/>
            <person name="Yokoi T."/>
            <person name="Furuya T."/>
            <person name="Kikkawa E."/>
            <person name="Omura Y."/>
            <person name="Abe K."/>
            <person name="Kamihara K."/>
            <person name="Katsuta N."/>
            <person name="Sato K."/>
            <person name="Tanikawa M."/>
            <person name="Yamazaki M."/>
            <person name="Ninomiya K."/>
            <person name="Ishibashi T."/>
            <person name="Yamashita H."/>
            <person name="Murakawa K."/>
            <person name="Fujimori K."/>
            <person name="Tanai H."/>
            <person name="Kimata M."/>
            <person name="Watanabe M."/>
            <person name="Hiraoka S."/>
            <person name="Chiba Y."/>
            <person name="Ishida S."/>
            <person name="Ono Y."/>
            <person name="Takiguchi S."/>
            <person name="Watanabe S."/>
            <person name="Yosida M."/>
            <person name="Hotuta T."/>
            <person name="Kusano J."/>
            <person name="Kanehori K."/>
            <person name="Takahashi-Fujii A."/>
            <person name="Hara H."/>
            <person name="Tanase T.-O."/>
            <person name="Nomura Y."/>
            <person name="Togiya S."/>
            <person name="Komai F."/>
            <person name="Hara R."/>
            <person name="Takeuchi K."/>
            <person name="Arita M."/>
            <person name="Imose N."/>
            <person name="Musashino K."/>
            <person name="Yuuki H."/>
            <person name="Oshima A."/>
            <person name="Sasaki N."/>
            <person name="Aotsuka S."/>
            <person name="Yoshikawa Y."/>
            <person name="Matsunawa H."/>
            <person name="Ichihara T."/>
            <person name="Shiohata N."/>
            <person name="Sano S."/>
            <person name="Moriya S."/>
            <person name="Momiyama H."/>
            <person name="Satoh N."/>
            <person name="Takami S."/>
            <person name="Terashima Y."/>
            <person name="Suzuki O."/>
            <person name="Nakagawa S."/>
            <person name="Senoh A."/>
            <person name="Mizoguchi H."/>
            <person name="Goto Y."/>
            <person name="Shimizu F."/>
            <person name="Wakebe H."/>
            <person name="Hishigaki H."/>
            <person name="Watanabe T."/>
            <person name="Sugiyama A."/>
            <person name="Takemoto M."/>
            <person name="Kawakami B."/>
            <person name="Yamazaki M."/>
            <person name="Watanabe K."/>
            <person name="Kumagai A."/>
            <person name="Itakura S."/>
            <person name="Fukuzumi Y."/>
            <person name="Fujimori Y."/>
            <person name="Komiyama M."/>
            <person name="Tashiro H."/>
            <person name="Tanigami A."/>
            <person name="Fujiwara T."/>
            <person name="Ono T."/>
            <person name="Yamada K."/>
            <person name="Fujii Y."/>
            <person name="Ozaki K."/>
            <person name="Hirao M."/>
            <person name="Ohmori Y."/>
            <person name="Kawabata A."/>
            <person name="Hikiji T."/>
            <person name="Kobatake N."/>
            <person name="Inagaki H."/>
            <person name="Ikema Y."/>
            <person name="Okamoto S."/>
            <person name="Okitani R."/>
            <person name="Kawakami T."/>
            <person name="Noguchi S."/>
            <person name="Itoh T."/>
            <person name="Shigeta K."/>
            <person name="Senba T."/>
            <person name="Matsumura K."/>
            <person name="Nakajima Y."/>
            <person name="Mizuno T."/>
            <person name="Morinaga M."/>
            <person name="Sasaki M."/>
            <person name="Togashi T."/>
            <person name="Oyama M."/>
            <person name="Hata H."/>
            <person name="Watanabe M."/>
            <person name="Komatsu T."/>
            <person name="Mizushima-Sugano J."/>
            <person name="Satoh T."/>
            <person name="Shirai Y."/>
            <person name="Takahashi Y."/>
            <person name="Nakagawa K."/>
            <person name="Okumura K."/>
            <person name="Nagase T."/>
            <person name="Nomura N."/>
            <person name="Kikuchi H."/>
            <person name="Masuho Y."/>
            <person name="Yamashita R."/>
            <person name="Nakai K."/>
            <person name="Yada T."/>
            <person name="Nakamura Y."/>
            <person name="Ohara O."/>
            <person name="Isogai T."/>
            <person name="Sugano S."/>
        </authorList>
    </citation>
    <scope>NUCLEOTIDE SEQUENCE [LARGE SCALE MRNA] (ISOFORMS 1 AND 3)</scope>
</reference>
<reference key="3">
    <citation type="journal article" date="2006" name="Nature">
        <title>The finished DNA sequence of human chromosome 12.</title>
        <authorList>
            <person name="Scherer S.E."/>
            <person name="Muzny D.M."/>
            <person name="Buhay C.J."/>
            <person name="Chen R."/>
            <person name="Cree A."/>
            <person name="Ding Y."/>
            <person name="Dugan-Rocha S."/>
            <person name="Gill R."/>
            <person name="Gunaratne P."/>
            <person name="Harris R.A."/>
            <person name="Hawes A.C."/>
            <person name="Hernandez J."/>
            <person name="Hodgson A.V."/>
            <person name="Hume J."/>
            <person name="Jackson A."/>
            <person name="Khan Z.M."/>
            <person name="Kovar-Smith C."/>
            <person name="Lewis L.R."/>
            <person name="Lozado R.J."/>
            <person name="Metzker M.L."/>
            <person name="Milosavljevic A."/>
            <person name="Miner G.R."/>
            <person name="Montgomery K.T."/>
            <person name="Morgan M.B."/>
            <person name="Nazareth L.V."/>
            <person name="Scott G."/>
            <person name="Sodergren E."/>
            <person name="Song X.-Z."/>
            <person name="Steffen D."/>
            <person name="Lovering R.C."/>
            <person name="Wheeler D.A."/>
            <person name="Worley K.C."/>
            <person name="Yuan Y."/>
            <person name="Zhang Z."/>
            <person name="Adams C.Q."/>
            <person name="Ansari-Lari M.A."/>
            <person name="Ayele M."/>
            <person name="Brown M.J."/>
            <person name="Chen G."/>
            <person name="Chen Z."/>
            <person name="Clerc-Blankenburg K.P."/>
            <person name="Davis C."/>
            <person name="Delgado O."/>
            <person name="Dinh H.H."/>
            <person name="Draper H."/>
            <person name="Gonzalez-Garay M.L."/>
            <person name="Havlak P."/>
            <person name="Jackson L.R."/>
            <person name="Jacob L.S."/>
            <person name="Kelly S.H."/>
            <person name="Li L."/>
            <person name="Li Z."/>
            <person name="Liu J."/>
            <person name="Liu W."/>
            <person name="Lu J."/>
            <person name="Maheshwari M."/>
            <person name="Nguyen B.-V."/>
            <person name="Okwuonu G.O."/>
            <person name="Pasternak S."/>
            <person name="Perez L.M."/>
            <person name="Plopper F.J.H."/>
            <person name="Santibanez J."/>
            <person name="Shen H."/>
            <person name="Tabor P.E."/>
            <person name="Verduzco D."/>
            <person name="Waldron L."/>
            <person name="Wang Q."/>
            <person name="Williams G.A."/>
            <person name="Zhang J."/>
            <person name="Zhou J."/>
            <person name="Allen C.C."/>
            <person name="Amin A.G."/>
            <person name="Anyalebechi V."/>
            <person name="Bailey M."/>
            <person name="Barbaria J.A."/>
            <person name="Bimage K.E."/>
            <person name="Bryant N.P."/>
            <person name="Burch P.E."/>
            <person name="Burkett C.E."/>
            <person name="Burrell K.L."/>
            <person name="Calderon E."/>
            <person name="Cardenas V."/>
            <person name="Carter K."/>
            <person name="Casias K."/>
            <person name="Cavazos I."/>
            <person name="Cavazos S.R."/>
            <person name="Ceasar H."/>
            <person name="Chacko J."/>
            <person name="Chan S.N."/>
            <person name="Chavez D."/>
            <person name="Christopoulos C."/>
            <person name="Chu J."/>
            <person name="Cockrell R."/>
            <person name="Cox C.D."/>
            <person name="Dang M."/>
            <person name="Dathorne S.R."/>
            <person name="David R."/>
            <person name="Davis C.M."/>
            <person name="Davy-Carroll L."/>
            <person name="Deshazo D.R."/>
            <person name="Donlin J.E."/>
            <person name="D'Souza L."/>
            <person name="Eaves K.A."/>
            <person name="Egan A."/>
            <person name="Emery-Cohen A.J."/>
            <person name="Escotto M."/>
            <person name="Flagg N."/>
            <person name="Forbes L.D."/>
            <person name="Gabisi A.M."/>
            <person name="Garza M."/>
            <person name="Hamilton C."/>
            <person name="Henderson N."/>
            <person name="Hernandez O."/>
            <person name="Hines S."/>
            <person name="Hogues M.E."/>
            <person name="Huang M."/>
            <person name="Idlebird D.G."/>
            <person name="Johnson R."/>
            <person name="Jolivet A."/>
            <person name="Jones S."/>
            <person name="Kagan R."/>
            <person name="King L.M."/>
            <person name="Leal B."/>
            <person name="Lebow H."/>
            <person name="Lee S."/>
            <person name="LeVan J.M."/>
            <person name="Lewis L.C."/>
            <person name="London P."/>
            <person name="Lorensuhewa L.M."/>
            <person name="Loulseged H."/>
            <person name="Lovett D.A."/>
            <person name="Lucier A."/>
            <person name="Lucier R.L."/>
            <person name="Ma J."/>
            <person name="Madu R.C."/>
            <person name="Mapua P."/>
            <person name="Martindale A.D."/>
            <person name="Martinez E."/>
            <person name="Massey E."/>
            <person name="Mawhiney S."/>
            <person name="Meador M.G."/>
            <person name="Mendez S."/>
            <person name="Mercado C."/>
            <person name="Mercado I.C."/>
            <person name="Merritt C.E."/>
            <person name="Miner Z.L."/>
            <person name="Minja E."/>
            <person name="Mitchell T."/>
            <person name="Mohabbat F."/>
            <person name="Mohabbat K."/>
            <person name="Montgomery B."/>
            <person name="Moore N."/>
            <person name="Morris S."/>
            <person name="Munidasa M."/>
            <person name="Ngo R.N."/>
            <person name="Nguyen N.B."/>
            <person name="Nickerson E."/>
            <person name="Nwaokelemeh O.O."/>
            <person name="Nwokenkwo S."/>
            <person name="Obregon M."/>
            <person name="Oguh M."/>
            <person name="Oragunye N."/>
            <person name="Oviedo R.J."/>
            <person name="Parish B.J."/>
            <person name="Parker D.N."/>
            <person name="Parrish J."/>
            <person name="Parks K.L."/>
            <person name="Paul H.A."/>
            <person name="Payton B.A."/>
            <person name="Perez A."/>
            <person name="Perrin W."/>
            <person name="Pickens A."/>
            <person name="Primus E.L."/>
            <person name="Pu L.-L."/>
            <person name="Puazo M."/>
            <person name="Quiles M.M."/>
            <person name="Quiroz J.B."/>
            <person name="Rabata D."/>
            <person name="Reeves K."/>
            <person name="Ruiz S.J."/>
            <person name="Shao H."/>
            <person name="Sisson I."/>
            <person name="Sonaike T."/>
            <person name="Sorelle R.P."/>
            <person name="Sutton A.E."/>
            <person name="Svatek A.F."/>
            <person name="Svetz L.A."/>
            <person name="Tamerisa K.S."/>
            <person name="Taylor T.R."/>
            <person name="Teague B."/>
            <person name="Thomas N."/>
            <person name="Thorn R.D."/>
            <person name="Trejos Z.Y."/>
            <person name="Trevino B.K."/>
            <person name="Ukegbu O.N."/>
            <person name="Urban J.B."/>
            <person name="Vasquez L.I."/>
            <person name="Vera V.A."/>
            <person name="Villasana D.M."/>
            <person name="Wang L."/>
            <person name="Ward-Moore S."/>
            <person name="Warren J.T."/>
            <person name="Wei X."/>
            <person name="White F."/>
            <person name="Williamson A.L."/>
            <person name="Wleczyk R."/>
            <person name="Wooden H.S."/>
            <person name="Wooden S.H."/>
            <person name="Yen J."/>
            <person name="Yoon L."/>
            <person name="Yoon V."/>
            <person name="Zorrilla S.E."/>
            <person name="Nelson D."/>
            <person name="Kucherlapati R."/>
            <person name="Weinstock G."/>
            <person name="Gibbs R.A."/>
        </authorList>
    </citation>
    <scope>NUCLEOTIDE SEQUENCE [LARGE SCALE GENOMIC DNA]</scope>
</reference>
<reference key="4">
    <citation type="submission" date="2005-09" db="EMBL/GenBank/DDBJ databases">
        <authorList>
            <person name="Mural R.J."/>
            <person name="Istrail S."/>
            <person name="Sutton G.G."/>
            <person name="Florea L."/>
            <person name="Halpern A.L."/>
            <person name="Mobarry C.M."/>
            <person name="Lippert R."/>
            <person name="Walenz B."/>
            <person name="Shatkay H."/>
            <person name="Dew I."/>
            <person name="Miller J.R."/>
            <person name="Flanigan M.J."/>
            <person name="Edwards N.J."/>
            <person name="Bolanos R."/>
            <person name="Fasulo D."/>
            <person name="Halldorsson B.V."/>
            <person name="Hannenhalli S."/>
            <person name="Turner R."/>
            <person name="Yooseph S."/>
            <person name="Lu F."/>
            <person name="Nusskern D.R."/>
            <person name="Shue B.C."/>
            <person name="Zheng X.H."/>
            <person name="Zhong F."/>
            <person name="Delcher A.L."/>
            <person name="Huson D.H."/>
            <person name="Kravitz S.A."/>
            <person name="Mouchard L."/>
            <person name="Reinert K."/>
            <person name="Remington K.A."/>
            <person name="Clark A.G."/>
            <person name="Waterman M.S."/>
            <person name="Eichler E.E."/>
            <person name="Adams M.D."/>
            <person name="Hunkapiller M.W."/>
            <person name="Myers E.W."/>
            <person name="Venter J.C."/>
        </authorList>
    </citation>
    <scope>NUCLEOTIDE SEQUENCE [LARGE SCALE GENOMIC DNA]</scope>
</reference>
<reference key="5">
    <citation type="journal article" date="2004" name="Genome Res.">
        <title>The status, quality, and expansion of the NIH full-length cDNA project: the Mammalian Gene Collection (MGC).</title>
        <authorList>
            <consortium name="The MGC Project Team"/>
        </authorList>
    </citation>
    <scope>NUCLEOTIDE SEQUENCE [LARGE SCALE MRNA] (ISOFORM 1)</scope>
    <source>
        <tissue>Eye</tissue>
    </source>
</reference>
<reference key="6">
    <citation type="journal article" date="2001" name="Science">
        <title>G-protein signaling through tubby proteins.</title>
        <authorList>
            <person name="Santagata S."/>
            <person name="Boggon T.J."/>
            <person name="Baird C.L."/>
            <person name="Gomez C.A."/>
            <person name="Zhao J."/>
            <person name="Shan W.S."/>
            <person name="Myszka D.G."/>
            <person name="Shapiro L."/>
        </authorList>
    </citation>
    <scope>FUNCTION IN G-PROTEIN SIGNALING</scope>
    <scope>SUBCELLULAR LOCATION</scope>
</reference>
<reference key="7">
    <citation type="journal article" date="2010" name="Genes Dev.">
        <title>TULP3 bridges the IFT-A complex and membrane phosphoinositides to promote trafficking of G protein-coupled receptors into primary cilia.</title>
        <authorList>
            <person name="Mukhopadhyay S."/>
            <person name="Wen X."/>
            <person name="Chih B."/>
            <person name="Nelson C.D."/>
            <person name="Lane W.S."/>
            <person name="Scales S.J."/>
            <person name="Jackson P.K."/>
        </authorList>
    </citation>
    <scope>FUNCTION</scope>
    <scope>SUBCELLULAR LOCATION</scope>
    <scope>ASSOCIATION WITH THE IFT-A COMPLEX</scope>
    <scope>MUTAGENESIS OF 24-ARG--LEU-34 AND 268-LYS--ARG-270</scope>
</reference>
<reference key="8">
    <citation type="journal article" date="2017" name="Mol. Biol. Cell">
        <title>Intraflagellar transport-A complex mediates ciliary entry and retrograde trafficking of ciliary G protein-coupled receptors.</title>
        <authorList>
            <person name="Hirano T."/>
            <person name="Katoh Y."/>
            <person name="Nakayama K."/>
        </authorList>
    </citation>
    <scope>ASSOCIATION WITH THE IFT-A COMPLEX</scope>
    <scope>SUBCELLULAR LOCATION</scope>
</reference>
<reference key="9">
    <citation type="journal article" date="2019" name="Cell">
        <title>Omega-3 Fatty Acids Activate Ciliary FFAR4 to Control Adipogenesis.</title>
        <authorList>
            <person name="Hilgendorf K.I."/>
            <person name="Johnson C.T."/>
            <person name="Mezger A."/>
            <person name="Rice S.L."/>
            <person name="Norris A.M."/>
            <person name="Demeter J."/>
            <person name="Greenleaf W.J."/>
            <person name="Reiter J.F."/>
            <person name="Kopinke D."/>
            <person name="Jackson P.K."/>
        </authorList>
    </citation>
    <scope>FUNCTION</scope>
</reference>
<reference key="10">
    <citation type="journal article" date="2022" name="Am. J. Hum. Genet.">
        <title>Progressive liver, kidney, and heart degeneration in children and adults affected by TULP3 mutations.</title>
        <authorList>
            <person name="Devane J."/>
            <person name="Ott E."/>
            <person name="Olinger E.G."/>
            <person name="Epting D."/>
            <person name="Decker E."/>
            <person name="Friedrich A."/>
            <person name="Bachmann N."/>
            <person name="Renschler G."/>
            <person name="Eisenberger T."/>
            <person name="Briem-Richter A."/>
            <person name="Grabhorn E.F."/>
            <person name="Powell L."/>
            <person name="Wilson I.J."/>
            <person name="Rice S.J."/>
            <person name="Miles C.G."/>
            <person name="Wood K."/>
            <person name="Trivedi P."/>
            <person name="Hirschfield G."/>
            <person name="Pietrobattista A."/>
            <person name="Wohler E."/>
            <person name="Mezina A."/>
            <person name="Sobreira N."/>
            <person name="Agolini E."/>
            <person name="Maggiore G."/>
            <person name="Dahmer-Heath M."/>
            <person name="Yilmaz A."/>
            <person name="Boerries M."/>
            <person name="Metzger P."/>
            <person name="Schell C."/>
            <person name="Gruenewald I."/>
            <person name="Konrad M."/>
            <person name="Koenig J."/>
            <person name="Schlevogt B."/>
            <person name="Sayer J.A."/>
            <person name="Bergmann C."/>
        </authorList>
    </citation>
    <scope>INVOLVEMENT IN HRCDF</scope>
    <scope>INTERACTION WITH SIRT1</scope>
    <scope>SUBCELLULAR LOCATION</scope>
    <scope>VARIANTS HRCDF 24-ARG--GLU-442 DEL; TRP-204 AND HIS-408</scope>
    <scope>CHARACTERIZATION OF VARIANT HRCDF HIS-408</scope>
</reference>
<comment type="function">
    <text evidence="3 4 6">Negative regulator of the Shh signaling transduction pathway: recruited to primary cilia via association with the IFT complex A (IFT-A) and is required for recruitment of G protein-coupled receptor GPR161 to cilia, a promoter of PKA-dependent basal repression machinery in Shh signaling. Binds to phosphorylated inositide (phosphoinositide) lipids. Both IFT-A- and phosphoinositide-binding properties are required to regulate ciliary G protein-coupled receptor trafficking. During adipogenesis, regulates ciliary trafficking of FFAR4 in preadipocytes.</text>
</comment>
<comment type="subunit">
    <text evidence="4 5 7">Associates with the IFT complex A (IFT-A) (PubMed:20889716, PubMed:27932497). Interacts with SIRT1 (PubMed:35397207).</text>
</comment>
<comment type="interaction">
    <interactant intactId="EBI-5357290">
        <id>O75386</id>
    </interactant>
    <interactant intactId="EBI-10102770">
        <id>Q6NXT1</id>
        <label>ANKRD54</label>
    </interactant>
    <organismsDiffer>false</organismsDiffer>
    <experiments>10</experiments>
</comment>
<comment type="interaction">
    <interactant intactId="EBI-5357290">
        <id>O75386</id>
    </interactant>
    <interactant intactId="EBI-1642333">
        <id>Q9BYV9</id>
        <label>BACH2</label>
    </interactant>
    <organismsDiffer>false</organismsDiffer>
    <experiments>5</experiments>
</comment>
<comment type="interaction">
    <interactant intactId="EBI-5357290">
        <id>O75386</id>
    </interactant>
    <interactant intactId="EBI-7116203">
        <id>O75031</id>
        <label>HSF2BP</label>
    </interactant>
    <organismsDiffer>false</organismsDiffer>
    <experiments>3</experiments>
</comment>
<comment type="interaction">
    <interactant intactId="EBI-5357290">
        <id>O75386</id>
    </interactant>
    <interactant intactId="EBI-10172150">
        <id>P60370</id>
        <label>KRTAP10-5</label>
    </interactant>
    <organismsDiffer>false</organismsDiffer>
    <experiments>3</experiments>
</comment>
<comment type="interaction">
    <interactant intactId="EBI-5357290">
        <id>O75386</id>
    </interactant>
    <interactant intactId="EBI-10172290">
        <id>P60409</id>
        <label>KRTAP10-7</label>
    </interactant>
    <organismsDiffer>false</organismsDiffer>
    <experiments>3</experiments>
</comment>
<comment type="interaction">
    <interactant intactId="EBI-5357290">
        <id>O75386</id>
    </interactant>
    <interactant intactId="EBI-1045155">
        <id>P43360</id>
        <label>MAGEA6</label>
    </interactant>
    <organismsDiffer>false</organismsDiffer>
    <experiments>7</experiments>
</comment>
<comment type="interaction">
    <interactant intactId="EBI-5357290">
        <id>O75386</id>
    </interactant>
    <interactant intactId="EBI-1050964">
        <id>O43586</id>
        <label>PSTPIP1</label>
    </interactant>
    <organismsDiffer>false</organismsDiffer>
    <experiments>6</experiments>
</comment>
<comment type="interaction">
    <interactant intactId="EBI-5357290">
        <id>O75386</id>
    </interactant>
    <interactant intactId="EBI-1378139">
        <id>Q9HAT0</id>
        <label>ROPN1</label>
    </interactant>
    <organismsDiffer>false</organismsDiffer>
    <experiments>3</experiments>
</comment>
<comment type="interaction">
    <interactant intactId="EBI-5357290">
        <id>O75386</id>
    </interactant>
    <interactant intactId="EBI-6164519">
        <id>P12520</id>
        <label>vpr</label>
    </interactant>
    <organismsDiffer>true</organismsDiffer>
    <experiments>2</experiments>
</comment>
<comment type="subcellular location">
    <subcellularLocation>
        <location>Nucleus</location>
    </subcellularLocation>
    <subcellularLocation>
        <location>Cell membrane</location>
    </subcellularLocation>
    <subcellularLocation>
        <location evidence="5 7">Cell projection</location>
        <location evidence="5 7">Cilium</location>
    </subcellularLocation>
    <subcellularLocation>
        <location evidence="1">Cytoplasm</location>
    </subcellularLocation>
    <subcellularLocation>
        <location evidence="1">Secreted</location>
    </subcellularLocation>
    <text evidence="1">Does not have a cleavable signal peptide and is secreted by a non-conventional pathway (By similarity). Translocates from the plasma membrane to the nucleus upon activation of guanine nucleotide-binding protein G(q) subunit alpha.</text>
</comment>
<comment type="alternative products">
    <event type="alternative splicing"/>
    <isoform>
        <id>O75386-1</id>
        <name>1</name>
        <sequence type="displayed"/>
    </isoform>
    <isoform>
        <id>O75386-2</id>
        <name>2</name>
        <sequence type="described" ref="VSP_054752"/>
    </isoform>
    <isoform>
        <id>O75386-3</id>
        <name>3</name>
        <sequence type="described" ref="VSP_055761 VSP_055762 VSP_055763"/>
    </isoform>
</comment>
<comment type="tissue specificity">
    <text evidence="8">Expressed at high levels in testis, ovaries, thyroid, and spinal cord.</text>
</comment>
<comment type="disease" evidence="7">
    <disease id="DI-06436">
        <name>Hepatorenocardiac degenerative fibrosis</name>
        <acronym>HRCDF</acronym>
        <description>An autosomal recessive disorder characterized by progressive degenerative liver fibrosis, fibrocystic kidney disease, and hypertrophic cardiomyopathy with atypical fibrotic patterns on histopathology. Disease onset is variable, ranging from childhood to adulthood.</description>
        <dbReference type="MIM" id="619902"/>
    </disease>
    <text>The disease is caused by variants affecting the gene represented in this entry.</text>
</comment>
<comment type="similarity">
    <text evidence="10">Belongs to the TUB family.</text>
</comment>